<gene>
    <name evidence="1" type="primary">csrA</name>
    <name type="ordered locus">SYNAS_13600</name>
    <name type="ORF">SYN_02810</name>
</gene>
<organism>
    <name type="scientific">Syntrophus aciditrophicus (strain SB)</name>
    <dbReference type="NCBI Taxonomy" id="56780"/>
    <lineage>
        <taxon>Bacteria</taxon>
        <taxon>Pseudomonadati</taxon>
        <taxon>Thermodesulfobacteriota</taxon>
        <taxon>Syntrophia</taxon>
        <taxon>Syntrophales</taxon>
        <taxon>Syntrophaceae</taxon>
        <taxon>Syntrophus</taxon>
    </lineage>
</organism>
<feature type="chain" id="PRO_1000023431" description="Translational regulator CsrA">
    <location>
        <begin position="1"/>
        <end position="79"/>
    </location>
</feature>
<proteinExistence type="inferred from homology"/>
<comment type="function">
    <text evidence="1">A translational regulator that binds mRNA to regulate translation initiation and/or mRNA stability. Usually binds in the 5'-UTR at or near the Shine-Dalgarno sequence preventing ribosome-binding, thus repressing translation. Its main target seems to be the major flagellin gene, while its function is anatagonized by FliW.</text>
</comment>
<comment type="subunit">
    <text evidence="1">Homodimer; the beta-strands of each monomer intercalate to form a hydrophobic core, while the alpha-helices form wings that extend away from the core.</text>
</comment>
<comment type="subcellular location">
    <subcellularLocation>
        <location evidence="1">Cytoplasm</location>
    </subcellularLocation>
</comment>
<comment type="similarity">
    <text evidence="1">Belongs to the CsrA/RsmA family.</text>
</comment>
<sequence length="79" mass="8842">MLILTRKLGESIVIGDQIQITLLDIKGKHVRIGVNAPKGIAVHRGEVYEMIQDENKKAFESDVKNSEMLSALWAQVKIL</sequence>
<accession>Q2LT33</accession>
<protein>
    <recommendedName>
        <fullName evidence="1">Translational regulator CsrA</fullName>
    </recommendedName>
</protein>
<keyword id="KW-1005">Bacterial flagellum biogenesis</keyword>
<keyword id="KW-0963">Cytoplasm</keyword>
<keyword id="KW-1185">Reference proteome</keyword>
<keyword id="KW-0678">Repressor</keyword>
<keyword id="KW-0694">RNA-binding</keyword>
<keyword id="KW-0810">Translation regulation</keyword>
<dbReference type="EMBL" id="CP000252">
    <property type="protein sequence ID" value="ABC77239.1"/>
    <property type="molecule type" value="Genomic_DNA"/>
</dbReference>
<dbReference type="RefSeq" id="WP_011417268.1">
    <property type="nucleotide sequence ID" value="NC_007759.1"/>
</dbReference>
<dbReference type="SMR" id="Q2LT33"/>
<dbReference type="FunCoup" id="Q2LT33">
    <property type="interactions" value="212"/>
</dbReference>
<dbReference type="STRING" id="56780.SYN_02810"/>
<dbReference type="KEGG" id="sat:SYN_02810"/>
<dbReference type="eggNOG" id="COG1551">
    <property type="taxonomic scope" value="Bacteria"/>
</dbReference>
<dbReference type="HOGENOM" id="CLU_164837_0_2_7"/>
<dbReference type="InParanoid" id="Q2LT33"/>
<dbReference type="OrthoDB" id="9809061at2"/>
<dbReference type="Proteomes" id="UP000001933">
    <property type="component" value="Chromosome"/>
</dbReference>
<dbReference type="GO" id="GO:0005829">
    <property type="term" value="C:cytosol"/>
    <property type="evidence" value="ECO:0007669"/>
    <property type="project" value="TreeGrafter"/>
</dbReference>
<dbReference type="GO" id="GO:0048027">
    <property type="term" value="F:mRNA 5'-UTR binding"/>
    <property type="evidence" value="ECO:0007669"/>
    <property type="project" value="UniProtKB-UniRule"/>
</dbReference>
<dbReference type="GO" id="GO:0044781">
    <property type="term" value="P:bacterial-type flagellum organization"/>
    <property type="evidence" value="ECO:0007669"/>
    <property type="project" value="UniProtKB-KW"/>
</dbReference>
<dbReference type="GO" id="GO:0006402">
    <property type="term" value="P:mRNA catabolic process"/>
    <property type="evidence" value="ECO:0007669"/>
    <property type="project" value="InterPro"/>
</dbReference>
<dbReference type="GO" id="GO:0045947">
    <property type="term" value="P:negative regulation of translational initiation"/>
    <property type="evidence" value="ECO:0007669"/>
    <property type="project" value="UniProtKB-UniRule"/>
</dbReference>
<dbReference type="GO" id="GO:1902208">
    <property type="term" value="P:regulation of bacterial-type flagellum assembly"/>
    <property type="evidence" value="ECO:0007669"/>
    <property type="project" value="UniProtKB-UniRule"/>
</dbReference>
<dbReference type="GO" id="GO:0006109">
    <property type="term" value="P:regulation of carbohydrate metabolic process"/>
    <property type="evidence" value="ECO:0007669"/>
    <property type="project" value="InterPro"/>
</dbReference>
<dbReference type="FunFam" id="2.60.40.4380:FF:000002">
    <property type="entry name" value="Translational regulator CsrA"/>
    <property type="match status" value="1"/>
</dbReference>
<dbReference type="Gene3D" id="2.60.40.4380">
    <property type="entry name" value="Translational regulator CsrA"/>
    <property type="match status" value="1"/>
</dbReference>
<dbReference type="HAMAP" id="MF_00167">
    <property type="entry name" value="CsrA"/>
    <property type="match status" value="1"/>
</dbReference>
<dbReference type="InterPro" id="IPR003751">
    <property type="entry name" value="CsrA"/>
</dbReference>
<dbReference type="InterPro" id="IPR036107">
    <property type="entry name" value="CsrA_sf"/>
</dbReference>
<dbReference type="NCBIfam" id="TIGR00202">
    <property type="entry name" value="csrA"/>
    <property type="match status" value="1"/>
</dbReference>
<dbReference type="NCBIfam" id="NF002469">
    <property type="entry name" value="PRK01712.1"/>
    <property type="match status" value="1"/>
</dbReference>
<dbReference type="PANTHER" id="PTHR34984">
    <property type="entry name" value="CARBON STORAGE REGULATOR"/>
    <property type="match status" value="1"/>
</dbReference>
<dbReference type="PANTHER" id="PTHR34984:SF1">
    <property type="entry name" value="CARBON STORAGE REGULATOR"/>
    <property type="match status" value="1"/>
</dbReference>
<dbReference type="Pfam" id="PF02599">
    <property type="entry name" value="CsrA"/>
    <property type="match status" value="1"/>
</dbReference>
<dbReference type="SUPFAM" id="SSF117130">
    <property type="entry name" value="CsrA-like"/>
    <property type="match status" value="1"/>
</dbReference>
<name>CSRA_SYNAS</name>
<evidence type="ECO:0000255" key="1">
    <source>
        <dbReference type="HAMAP-Rule" id="MF_00167"/>
    </source>
</evidence>
<reference key="1">
    <citation type="journal article" date="2007" name="Proc. Natl. Acad. Sci. U.S.A.">
        <title>The genome of Syntrophus aciditrophicus: life at the thermodynamic limit of microbial growth.</title>
        <authorList>
            <person name="McInerney M.J."/>
            <person name="Rohlin L."/>
            <person name="Mouttaki H."/>
            <person name="Kim U."/>
            <person name="Krupp R.S."/>
            <person name="Rios-Hernandez L."/>
            <person name="Sieber J."/>
            <person name="Struchtemeyer C.G."/>
            <person name="Bhattacharyya A."/>
            <person name="Campbell J.W."/>
            <person name="Gunsalus R.P."/>
        </authorList>
    </citation>
    <scope>NUCLEOTIDE SEQUENCE [LARGE SCALE GENOMIC DNA]</scope>
    <source>
        <strain>SB</strain>
    </source>
</reference>